<comment type="function">
    <text evidence="1">Bidirectionally degrades single-stranded DNA into large acid-insoluble oligonucleotides, which are then degraded further into small acid-soluble oligonucleotides.</text>
</comment>
<comment type="catalytic activity">
    <reaction evidence="1">
        <text>Exonucleolytic cleavage in either 5'- to 3'- or 3'- to 5'-direction to yield nucleoside 5'-phosphates.</text>
        <dbReference type="EC" id="3.1.11.6"/>
    </reaction>
</comment>
<comment type="subunit">
    <text evidence="1">Heterooligomer composed of large and small subunits.</text>
</comment>
<comment type="subcellular location">
    <subcellularLocation>
        <location evidence="1">Cytoplasm</location>
    </subcellularLocation>
</comment>
<comment type="similarity">
    <text evidence="1">Belongs to the XseB family.</text>
</comment>
<gene>
    <name evidence="1" type="primary">xseB</name>
    <name type="ordered locus">Daro_3059</name>
</gene>
<feature type="chain" id="PRO_1000205218" description="Exodeoxyribonuclease 7 small subunit">
    <location>
        <begin position="1"/>
        <end position="79"/>
    </location>
</feature>
<dbReference type="EC" id="3.1.11.6" evidence="1"/>
<dbReference type="EMBL" id="CP000089">
    <property type="protein sequence ID" value="AAZ47789.1"/>
    <property type="molecule type" value="Genomic_DNA"/>
</dbReference>
<dbReference type="SMR" id="Q47BJ2"/>
<dbReference type="STRING" id="159087.Daro_3059"/>
<dbReference type="KEGG" id="dar:Daro_3059"/>
<dbReference type="eggNOG" id="COG1722">
    <property type="taxonomic scope" value="Bacteria"/>
</dbReference>
<dbReference type="HOGENOM" id="CLU_145918_2_0_4"/>
<dbReference type="OrthoDB" id="287668at2"/>
<dbReference type="GO" id="GO:0005829">
    <property type="term" value="C:cytosol"/>
    <property type="evidence" value="ECO:0007669"/>
    <property type="project" value="TreeGrafter"/>
</dbReference>
<dbReference type="GO" id="GO:0009318">
    <property type="term" value="C:exodeoxyribonuclease VII complex"/>
    <property type="evidence" value="ECO:0007669"/>
    <property type="project" value="InterPro"/>
</dbReference>
<dbReference type="GO" id="GO:0008855">
    <property type="term" value="F:exodeoxyribonuclease VII activity"/>
    <property type="evidence" value="ECO:0007669"/>
    <property type="project" value="UniProtKB-UniRule"/>
</dbReference>
<dbReference type="GO" id="GO:0006308">
    <property type="term" value="P:DNA catabolic process"/>
    <property type="evidence" value="ECO:0007669"/>
    <property type="project" value="UniProtKB-UniRule"/>
</dbReference>
<dbReference type="Gene3D" id="1.10.287.1040">
    <property type="entry name" value="Exonuclease VII, small subunit"/>
    <property type="match status" value="1"/>
</dbReference>
<dbReference type="HAMAP" id="MF_00337">
    <property type="entry name" value="Exonuc_7_S"/>
    <property type="match status" value="1"/>
</dbReference>
<dbReference type="InterPro" id="IPR003761">
    <property type="entry name" value="Exonuc_VII_S"/>
</dbReference>
<dbReference type="InterPro" id="IPR037004">
    <property type="entry name" value="Exonuc_VII_ssu_sf"/>
</dbReference>
<dbReference type="NCBIfam" id="NF002140">
    <property type="entry name" value="PRK00977.1-4"/>
    <property type="match status" value="1"/>
</dbReference>
<dbReference type="NCBIfam" id="NF002141">
    <property type="entry name" value="PRK00977.1-5"/>
    <property type="match status" value="1"/>
</dbReference>
<dbReference type="NCBIfam" id="TIGR01280">
    <property type="entry name" value="xseB"/>
    <property type="match status" value="1"/>
</dbReference>
<dbReference type="PANTHER" id="PTHR34137">
    <property type="entry name" value="EXODEOXYRIBONUCLEASE 7 SMALL SUBUNIT"/>
    <property type="match status" value="1"/>
</dbReference>
<dbReference type="PANTHER" id="PTHR34137:SF1">
    <property type="entry name" value="EXODEOXYRIBONUCLEASE 7 SMALL SUBUNIT"/>
    <property type="match status" value="1"/>
</dbReference>
<dbReference type="Pfam" id="PF02609">
    <property type="entry name" value="Exonuc_VII_S"/>
    <property type="match status" value="1"/>
</dbReference>
<dbReference type="PIRSF" id="PIRSF006488">
    <property type="entry name" value="Exonuc_VII_S"/>
    <property type="match status" value="1"/>
</dbReference>
<dbReference type="SUPFAM" id="SSF116842">
    <property type="entry name" value="XseB-like"/>
    <property type="match status" value="1"/>
</dbReference>
<protein>
    <recommendedName>
        <fullName evidence="1">Exodeoxyribonuclease 7 small subunit</fullName>
        <ecNumber evidence="1">3.1.11.6</ecNumber>
    </recommendedName>
    <alternativeName>
        <fullName evidence="1">Exodeoxyribonuclease VII small subunit</fullName>
        <shortName evidence="1">Exonuclease VII small subunit</shortName>
    </alternativeName>
</protein>
<evidence type="ECO:0000255" key="1">
    <source>
        <dbReference type="HAMAP-Rule" id="MF_00337"/>
    </source>
</evidence>
<reference key="1">
    <citation type="journal article" date="2009" name="BMC Genomics">
        <title>Metabolic analysis of the soil microbe Dechloromonas aromatica str. RCB: indications of a surprisingly complex life-style and cryptic anaerobic pathways for aromatic degradation.</title>
        <authorList>
            <person name="Salinero K.K."/>
            <person name="Keller K."/>
            <person name="Feil W.S."/>
            <person name="Feil H."/>
            <person name="Trong S."/>
            <person name="Di Bartolo G."/>
            <person name="Lapidus A."/>
        </authorList>
    </citation>
    <scope>NUCLEOTIDE SEQUENCE [LARGE SCALE GENOMIC DNA]</scope>
    <source>
        <strain>RCB</strain>
    </source>
</reference>
<sequence length="79" mass="8787">MDQTPIADMKFETALAELEDIVASMEGGKLELEASIAAYKRGMELMKHCQNQLADAEAQIRVLENGQFKDVDRSTLEAQ</sequence>
<proteinExistence type="inferred from homology"/>
<accession>Q47BJ2</accession>
<keyword id="KW-0963">Cytoplasm</keyword>
<keyword id="KW-0269">Exonuclease</keyword>
<keyword id="KW-0378">Hydrolase</keyword>
<keyword id="KW-0540">Nuclease</keyword>
<organism>
    <name type="scientific">Dechloromonas aromatica (strain RCB)</name>
    <dbReference type="NCBI Taxonomy" id="159087"/>
    <lineage>
        <taxon>Bacteria</taxon>
        <taxon>Pseudomonadati</taxon>
        <taxon>Pseudomonadota</taxon>
        <taxon>Betaproteobacteria</taxon>
        <taxon>Rhodocyclales</taxon>
        <taxon>Azonexaceae</taxon>
        <taxon>Dechloromonas</taxon>
    </lineage>
</organism>
<name>EX7S_DECAR</name>